<protein>
    <recommendedName>
        <fullName evidence="1">Iron-sulfur cluster insertion protein ErpA</fullName>
    </recommendedName>
</protein>
<dbReference type="EMBL" id="CP001233">
    <property type="protein sequence ID" value="ACP04908.1"/>
    <property type="molecule type" value="Genomic_DNA"/>
</dbReference>
<dbReference type="RefSeq" id="WP_000005741.1">
    <property type="nucleotide sequence ID" value="NC_012578.1"/>
</dbReference>
<dbReference type="SMR" id="C3LSN2"/>
<dbReference type="GeneID" id="88784003"/>
<dbReference type="KEGG" id="vcm:VCM66_0585"/>
<dbReference type="HOGENOM" id="CLU_069054_5_3_6"/>
<dbReference type="Proteomes" id="UP000001217">
    <property type="component" value="Chromosome I"/>
</dbReference>
<dbReference type="GO" id="GO:0005829">
    <property type="term" value="C:cytosol"/>
    <property type="evidence" value="ECO:0007669"/>
    <property type="project" value="TreeGrafter"/>
</dbReference>
<dbReference type="GO" id="GO:0051537">
    <property type="term" value="F:2 iron, 2 sulfur cluster binding"/>
    <property type="evidence" value="ECO:0007669"/>
    <property type="project" value="TreeGrafter"/>
</dbReference>
<dbReference type="GO" id="GO:0051539">
    <property type="term" value="F:4 iron, 4 sulfur cluster binding"/>
    <property type="evidence" value="ECO:0007669"/>
    <property type="project" value="TreeGrafter"/>
</dbReference>
<dbReference type="GO" id="GO:0005506">
    <property type="term" value="F:iron ion binding"/>
    <property type="evidence" value="ECO:0007669"/>
    <property type="project" value="UniProtKB-UniRule"/>
</dbReference>
<dbReference type="GO" id="GO:0016226">
    <property type="term" value="P:iron-sulfur cluster assembly"/>
    <property type="evidence" value="ECO:0007669"/>
    <property type="project" value="UniProtKB-UniRule"/>
</dbReference>
<dbReference type="FunFam" id="2.60.300.12:FF:000002">
    <property type="entry name" value="Iron-sulfur cluster insertion protein ErpA"/>
    <property type="match status" value="1"/>
</dbReference>
<dbReference type="Gene3D" id="2.60.300.12">
    <property type="entry name" value="HesB-like domain"/>
    <property type="match status" value="1"/>
</dbReference>
<dbReference type="HAMAP" id="MF_01380">
    <property type="entry name" value="Fe_S_insert_ErpA"/>
    <property type="match status" value="1"/>
</dbReference>
<dbReference type="InterPro" id="IPR000361">
    <property type="entry name" value="FeS_biogenesis"/>
</dbReference>
<dbReference type="InterPro" id="IPR016092">
    <property type="entry name" value="FeS_cluster_insertion"/>
</dbReference>
<dbReference type="InterPro" id="IPR017870">
    <property type="entry name" value="FeS_cluster_insertion_CS"/>
</dbReference>
<dbReference type="InterPro" id="IPR023063">
    <property type="entry name" value="FeS_cluster_insertion_RrpA"/>
</dbReference>
<dbReference type="InterPro" id="IPR035903">
    <property type="entry name" value="HesB-like_dom_sf"/>
</dbReference>
<dbReference type="NCBIfam" id="TIGR00049">
    <property type="entry name" value="iron-sulfur cluster assembly accessory protein"/>
    <property type="match status" value="1"/>
</dbReference>
<dbReference type="NCBIfam" id="NF010147">
    <property type="entry name" value="PRK13623.1"/>
    <property type="match status" value="1"/>
</dbReference>
<dbReference type="PANTHER" id="PTHR43011">
    <property type="entry name" value="IRON-SULFUR CLUSTER ASSEMBLY 2 HOMOLOG, MITOCHONDRIAL"/>
    <property type="match status" value="1"/>
</dbReference>
<dbReference type="PANTHER" id="PTHR43011:SF1">
    <property type="entry name" value="IRON-SULFUR CLUSTER ASSEMBLY 2 HOMOLOG, MITOCHONDRIAL"/>
    <property type="match status" value="1"/>
</dbReference>
<dbReference type="Pfam" id="PF01521">
    <property type="entry name" value="Fe-S_biosyn"/>
    <property type="match status" value="1"/>
</dbReference>
<dbReference type="SUPFAM" id="SSF89360">
    <property type="entry name" value="HesB-like domain"/>
    <property type="match status" value="1"/>
</dbReference>
<dbReference type="PROSITE" id="PS01152">
    <property type="entry name" value="HESB"/>
    <property type="match status" value="1"/>
</dbReference>
<organism>
    <name type="scientific">Vibrio cholerae serotype O1 (strain M66-2)</name>
    <dbReference type="NCBI Taxonomy" id="579112"/>
    <lineage>
        <taxon>Bacteria</taxon>
        <taxon>Pseudomonadati</taxon>
        <taxon>Pseudomonadota</taxon>
        <taxon>Gammaproteobacteria</taxon>
        <taxon>Vibrionales</taxon>
        <taxon>Vibrionaceae</taxon>
        <taxon>Vibrio</taxon>
    </lineage>
</organism>
<evidence type="ECO:0000255" key="1">
    <source>
        <dbReference type="HAMAP-Rule" id="MF_01380"/>
    </source>
</evidence>
<feature type="chain" id="PRO_1000184206" description="Iron-sulfur cluster insertion protein ErpA">
    <location>
        <begin position="1"/>
        <end position="113"/>
    </location>
</feature>
<feature type="binding site" evidence="1">
    <location>
        <position position="41"/>
    </location>
    <ligand>
        <name>iron-sulfur cluster</name>
        <dbReference type="ChEBI" id="CHEBI:30408"/>
    </ligand>
</feature>
<feature type="binding site" evidence="1">
    <location>
        <position position="105"/>
    </location>
    <ligand>
        <name>iron-sulfur cluster</name>
        <dbReference type="ChEBI" id="CHEBI:30408"/>
    </ligand>
</feature>
<feature type="binding site" evidence="1">
    <location>
        <position position="107"/>
    </location>
    <ligand>
        <name>iron-sulfur cluster</name>
        <dbReference type="ChEBI" id="CHEBI:30408"/>
    </ligand>
</feature>
<comment type="function">
    <text evidence="1">Required for insertion of 4Fe-4S clusters for at least IspG.</text>
</comment>
<comment type="cofactor">
    <cofactor evidence="1">
        <name>iron-sulfur cluster</name>
        <dbReference type="ChEBI" id="CHEBI:30408"/>
    </cofactor>
    <text evidence="1">Binds 1 iron-sulfur cluster per subunit.</text>
</comment>
<comment type="subunit">
    <text evidence="1">Homodimer.</text>
</comment>
<comment type="similarity">
    <text evidence="1">Belongs to the HesB/IscA family.</text>
</comment>
<keyword id="KW-0408">Iron</keyword>
<keyword id="KW-0411">Iron-sulfur</keyword>
<keyword id="KW-0479">Metal-binding</keyword>
<gene>
    <name evidence="1" type="primary">erpA</name>
    <name type="ordered locus">VCM66_0585</name>
</gene>
<sequence length="113" mass="12017">MSEVNVPLSFSDAAAKRVKALIAEEENPSLMLRVYITGGGCSGFQYGFTFDETVNEGDTKIENSGVILVVDPMSLQYLIGGVVDYTEGLEGSRFFVNNPNATTTCGCGASFSV</sequence>
<accession>C3LSN2</accession>
<proteinExistence type="inferred from homology"/>
<name>ERPA_VIBCM</name>
<reference key="1">
    <citation type="journal article" date="2008" name="PLoS ONE">
        <title>A recalibrated molecular clock and independent origins for the cholera pandemic clones.</title>
        <authorList>
            <person name="Feng L."/>
            <person name="Reeves P.R."/>
            <person name="Lan R."/>
            <person name="Ren Y."/>
            <person name="Gao C."/>
            <person name="Zhou Z."/>
            <person name="Ren Y."/>
            <person name="Cheng J."/>
            <person name="Wang W."/>
            <person name="Wang J."/>
            <person name="Qian W."/>
            <person name="Li D."/>
            <person name="Wang L."/>
        </authorList>
    </citation>
    <scope>NUCLEOTIDE SEQUENCE [LARGE SCALE GENOMIC DNA]</scope>
    <source>
        <strain>M66-2</strain>
    </source>
</reference>